<proteinExistence type="inferred from homology"/>
<dbReference type="EC" id="3.1.3.89" evidence="1"/>
<dbReference type="EMBL" id="BX936398">
    <property type="protein sequence ID" value="CAH21828.1"/>
    <property type="molecule type" value="Genomic_DNA"/>
</dbReference>
<dbReference type="RefSeq" id="WP_011192672.1">
    <property type="nucleotide sequence ID" value="NC_006155.1"/>
</dbReference>
<dbReference type="SMR" id="Q668Z7"/>
<dbReference type="KEGG" id="ypo:BZ17_4048"/>
<dbReference type="KEGG" id="yps:YPTB2590"/>
<dbReference type="PATRIC" id="fig|273123.14.peg.4251"/>
<dbReference type="Proteomes" id="UP000001011">
    <property type="component" value="Chromosome"/>
</dbReference>
<dbReference type="GO" id="GO:0005737">
    <property type="term" value="C:cytoplasm"/>
    <property type="evidence" value="ECO:0007669"/>
    <property type="project" value="UniProtKB-SubCell"/>
</dbReference>
<dbReference type="GO" id="GO:0002953">
    <property type="term" value="F:5'-deoxynucleotidase activity"/>
    <property type="evidence" value="ECO:0007669"/>
    <property type="project" value="UniProtKB-EC"/>
</dbReference>
<dbReference type="GO" id="GO:0046872">
    <property type="term" value="F:metal ion binding"/>
    <property type="evidence" value="ECO:0007669"/>
    <property type="project" value="UniProtKB-KW"/>
</dbReference>
<dbReference type="GO" id="GO:0000166">
    <property type="term" value="F:nucleotide binding"/>
    <property type="evidence" value="ECO:0007669"/>
    <property type="project" value="UniProtKB-KW"/>
</dbReference>
<dbReference type="FunFam" id="1.10.3210.10:FF:000002">
    <property type="entry name" value="Nucleotidase YfbR"/>
    <property type="match status" value="1"/>
</dbReference>
<dbReference type="Gene3D" id="1.10.3210.10">
    <property type="entry name" value="Hypothetical protein af1432"/>
    <property type="match status" value="1"/>
</dbReference>
<dbReference type="HAMAP" id="MF_01100">
    <property type="entry name" value="5DNU"/>
    <property type="match status" value="1"/>
</dbReference>
<dbReference type="InterPro" id="IPR003607">
    <property type="entry name" value="HD/PDEase_dom"/>
</dbReference>
<dbReference type="InterPro" id="IPR006674">
    <property type="entry name" value="HD_domain"/>
</dbReference>
<dbReference type="InterPro" id="IPR022971">
    <property type="entry name" value="YfbR"/>
</dbReference>
<dbReference type="InterPro" id="IPR039356">
    <property type="entry name" value="YfbR/HDDC2"/>
</dbReference>
<dbReference type="NCBIfam" id="NF003009">
    <property type="entry name" value="PRK03826.1"/>
    <property type="match status" value="1"/>
</dbReference>
<dbReference type="PANTHER" id="PTHR11845">
    <property type="entry name" value="5'-DEOXYNUCLEOTIDASE HDDC2"/>
    <property type="match status" value="1"/>
</dbReference>
<dbReference type="PANTHER" id="PTHR11845:SF13">
    <property type="entry name" value="5'-DEOXYNUCLEOTIDASE HDDC2"/>
    <property type="match status" value="1"/>
</dbReference>
<dbReference type="Pfam" id="PF12917">
    <property type="entry name" value="YfbR-like"/>
    <property type="match status" value="1"/>
</dbReference>
<dbReference type="SMART" id="SM00471">
    <property type="entry name" value="HDc"/>
    <property type="match status" value="1"/>
</dbReference>
<dbReference type="SUPFAM" id="SSF109604">
    <property type="entry name" value="HD-domain/PDEase-like"/>
    <property type="match status" value="1"/>
</dbReference>
<dbReference type="PROSITE" id="PS51831">
    <property type="entry name" value="HD"/>
    <property type="match status" value="1"/>
</dbReference>
<protein>
    <recommendedName>
        <fullName evidence="1">5'-deoxynucleotidase YPTB2590</fullName>
        <ecNumber evidence="1">3.1.3.89</ecNumber>
    </recommendedName>
    <alternativeName>
        <fullName evidence="1">5'-deoxyribonucleotidase</fullName>
    </alternativeName>
    <alternativeName>
        <fullName evidence="1">Nucleoside 5'-monophosphate phosphohydrolase</fullName>
    </alternativeName>
</protein>
<sequence>MSHFFAHLSRLKLINRWPLMRNVRTENVSEHSLQVAFVAHALAIIKNRKFNGNLNAERIALLAMYHDASEVITGDLPTPIKYHNPKIAHEYKKIEKVAQQKLIEMLPKELQHDFRCLLDEHYYSEEEKALVKQADALCAYLKCLEELSAGNNEFIQAKARLENTLAIRQSPEMDYFMAVFVPSFSLSLDEISLDSLD</sequence>
<evidence type="ECO:0000255" key="1">
    <source>
        <dbReference type="HAMAP-Rule" id="MF_01100"/>
    </source>
</evidence>
<evidence type="ECO:0000255" key="2">
    <source>
        <dbReference type="PROSITE-ProRule" id="PRU01175"/>
    </source>
</evidence>
<accession>Q668Z7</accession>
<keyword id="KW-0963">Cytoplasm</keyword>
<keyword id="KW-0378">Hydrolase</keyword>
<keyword id="KW-0479">Metal-binding</keyword>
<keyword id="KW-0547">Nucleotide-binding</keyword>
<name>5DNU_YERPS</name>
<feature type="chain" id="PRO_0000095066" description="5'-deoxynucleotidase YPTB2590">
    <location>
        <begin position="1"/>
        <end position="197"/>
    </location>
</feature>
<feature type="domain" description="HD" evidence="2">
    <location>
        <begin position="28"/>
        <end position="140"/>
    </location>
</feature>
<feature type="binding site" evidence="1">
    <location>
        <begin position="16"/>
        <end position="17"/>
    </location>
    <ligand>
        <name>substrate</name>
    </ligand>
</feature>
<feature type="binding site" evidence="1">
    <location>
        <position position="31"/>
    </location>
    <ligand>
        <name>a divalent metal cation</name>
        <dbReference type="ChEBI" id="CHEBI:60240"/>
    </ligand>
</feature>
<feature type="binding site" evidence="1">
    <location>
        <position position="31"/>
    </location>
    <ligand>
        <name>substrate</name>
    </ligand>
</feature>
<feature type="binding site" evidence="1">
    <location>
        <position position="66"/>
    </location>
    <ligand>
        <name>a divalent metal cation</name>
        <dbReference type="ChEBI" id="CHEBI:60240"/>
    </ligand>
</feature>
<feature type="binding site" evidence="1">
    <location>
        <position position="67"/>
    </location>
    <ligand>
        <name>a divalent metal cation</name>
        <dbReference type="ChEBI" id="CHEBI:60240"/>
    </ligand>
</feature>
<feature type="binding site" evidence="1">
    <location>
        <position position="67"/>
    </location>
    <ligand>
        <name>substrate</name>
    </ligand>
</feature>
<feature type="binding site" evidence="1">
    <location>
        <begin position="75"/>
        <end position="78"/>
    </location>
    <ligand>
        <name>substrate</name>
    </ligand>
</feature>
<feature type="binding site" evidence="1">
    <location>
        <position position="135"/>
    </location>
    <ligand>
        <name>a divalent metal cation</name>
        <dbReference type="ChEBI" id="CHEBI:60240"/>
    </ligand>
</feature>
<feature type="binding site" evidence="1">
    <location>
        <position position="135"/>
    </location>
    <ligand>
        <name>substrate</name>
    </ligand>
</feature>
<feature type="site" description="Appears to be important in orienting the phosphate for catalysis" evidence="1">
    <location>
        <position position="16"/>
    </location>
</feature>
<comment type="function">
    <text evidence="1">Catalyzes the strictly specific dephosphorylation of 2'-deoxyribonucleoside 5'-monophosphates.</text>
</comment>
<comment type="catalytic activity">
    <reaction evidence="1">
        <text>a 2'-deoxyribonucleoside 5'-phosphate + H2O = a 2'-deoxyribonucleoside + phosphate</text>
        <dbReference type="Rhea" id="RHEA:36167"/>
        <dbReference type="ChEBI" id="CHEBI:15377"/>
        <dbReference type="ChEBI" id="CHEBI:18274"/>
        <dbReference type="ChEBI" id="CHEBI:43474"/>
        <dbReference type="ChEBI" id="CHEBI:65317"/>
        <dbReference type="EC" id="3.1.3.89"/>
    </reaction>
</comment>
<comment type="cofactor">
    <cofactor evidence="1">
        <name>a divalent metal cation</name>
        <dbReference type="ChEBI" id="CHEBI:60240"/>
    </cofactor>
</comment>
<comment type="subunit">
    <text evidence="1">Homodimer.</text>
</comment>
<comment type="subcellular location">
    <subcellularLocation>
        <location evidence="1">Cytoplasm</location>
    </subcellularLocation>
</comment>
<comment type="similarity">
    <text evidence="1">Belongs to the 5DNU family.</text>
</comment>
<organism>
    <name type="scientific">Yersinia pseudotuberculosis serotype I (strain IP32953)</name>
    <dbReference type="NCBI Taxonomy" id="273123"/>
    <lineage>
        <taxon>Bacteria</taxon>
        <taxon>Pseudomonadati</taxon>
        <taxon>Pseudomonadota</taxon>
        <taxon>Gammaproteobacteria</taxon>
        <taxon>Enterobacterales</taxon>
        <taxon>Yersiniaceae</taxon>
        <taxon>Yersinia</taxon>
    </lineage>
</organism>
<gene>
    <name type="ordered locus">YPTB2590</name>
</gene>
<reference key="1">
    <citation type="journal article" date="2004" name="Proc. Natl. Acad. Sci. U.S.A.">
        <title>Insights into the evolution of Yersinia pestis through whole-genome comparison with Yersinia pseudotuberculosis.</title>
        <authorList>
            <person name="Chain P.S.G."/>
            <person name="Carniel E."/>
            <person name="Larimer F.W."/>
            <person name="Lamerdin J."/>
            <person name="Stoutland P.O."/>
            <person name="Regala W.M."/>
            <person name="Georgescu A.M."/>
            <person name="Vergez L.M."/>
            <person name="Land M.L."/>
            <person name="Motin V.L."/>
            <person name="Brubaker R.R."/>
            <person name="Fowler J."/>
            <person name="Hinnebusch J."/>
            <person name="Marceau M."/>
            <person name="Medigue C."/>
            <person name="Simonet M."/>
            <person name="Chenal-Francisque V."/>
            <person name="Souza B."/>
            <person name="Dacheux D."/>
            <person name="Elliott J.M."/>
            <person name="Derbise A."/>
            <person name="Hauser L.J."/>
            <person name="Garcia E."/>
        </authorList>
    </citation>
    <scope>NUCLEOTIDE SEQUENCE [LARGE SCALE GENOMIC DNA]</scope>
    <source>
        <strain>IP32953</strain>
    </source>
</reference>